<feature type="chain" id="PRO_0000135266" description="Coproporphyrinogen III oxidase">
    <location>
        <begin position="1"/>
        <end position="452"/>
    </location>
</feature>
<feature type="binding site" evidence="1">
    <location>
        <begin position="10"/>
        <end position="15"/>
    </location>
    <ligand>
        <name>FAD</name>
        <dbReference type="ChEBI" id="CHEBI:57692"/>
    </ligand>
</feature>
<feature type="binding site" evidence="1">
    <location>
        <begin position="36"/>
        <end position="37"/>
    </location>
    <ligand>
        <name>FAD</name>
        <dbReference type="ChEBI" id="CHEBI:57692"/>
    </ligand>
</feature>
<feature type="binding site" evidence="1">
    <location>
        <begin position="58"/>
        <end position="61"/>
    </location>
    <ligand>
        <name>FAD</name>
        <dbReference type="ChEBI" id="CHEBI:57692"/>
    </ligand>
</feature>
<feature type="binding site" evidence="2">
    <location>
        <position position="242"/>
    </location>
    <ligand>
        <name>FAD</name>
        <dbReference type="ChEBI" id="CHEBI:57692"/>
    </ligand>
</feature>
<feature type="binding site" evidence="1">
    <location>
        <position position="390"/>
    </location>
    <ligand>
        <name>FAD</name>
        <dbReference type="ChEBI" id="CHEBI:57692"/>
    </ligand>
</feature>
<feature type="binding site" evidence="1">
    <location>
        <begin position="426"/>
        <end position="428"/>
    </location>
    <ligand>
        <name>FAD</name>
        <dbReference type="ChEBI" id="CHEBI:57692"/>
    </ligand>
</feature>
<sequence>MTPRSYCVVGGGISGLTSAYRLRQAVGDDATITLFEPADRLGGVLRTEHIGGQPMDLGAEAFVLRRPEMPALLAELGLSDRQLASTGARPLIYSQQRLHPLPPQTVVGIPSSAGSMAGLVDDATLARIDAEAARPFTWQVGSDPAVADLVADRFGDQVVARSVDPLLSGVYAGSAATIGLRAAAPSVAAALDRGATSVTDAVRQALPPGSGGPVFGALDGGYQVLLDGLVRRSRVHWVRARVVQLERGWVLRDETGGRWQADAVILAVPAPRLARLVDGIAPRTHAAARQIVSASSAVVALAVPGGTAFPHCSGVLVAGDESPHAKAITLSSRKWGQRGDVALLRLSFGRFGDEPALTASDDQLLAWAADDLVTVFGVAVDPVDVRVRRWIEAMPQYGPGHADVVAELRAGLPPTLAVAGSYLDGIGVPACVGAAGRAVTSVIEALDAQVAR</sequence>
<accession>P0A5A8</accession>
<accession>A0A1R3Y1V5</accession>
<accession>O53230</accession>
<accession>X2BLI7</accession>
<evidence type="ECO:0000250" key="1">
    <source>
        <dbReference type="UniProtKB" id="P32397"/>
    </source>
</evidence>
<evidence type="ECO:0000250" key="2">
    <source>
        <dbReference type="UniProtKB" id="P56601"/>
    </source>
</evidence>
<evidence type="ECO:0000305" key="3"/>
<keyword id="KW-0963">Cytoplasm</keyword>
<keyword id="KW-0274">FAD</keyword>
<keyword id="KW-0285">Flavoprotein</keyword>
<keyword id="KW-0350">Heme biosynthesis</keyword>
<keyword id="KW-0560">Oxidoreductase</keyword>
<keyword id="KW-1185">Reference proteome</keyword>
<comment type="function">
    <text evidence="1">Involved in coproporphyrin-dependent heme b biosynthesis. Catalyzes the oxidation of coproporphyrinogen III to coproporphyrin III.</text>
</comment>
<comment type="catalytic activity">
    <reaction evidence="1">
        <text>coproporphyrinogen III + 3 O2 = coproporphyrin III + 3 H2O2</text>
        <dbReference type="Rhea" id="RHEA:43436"/>
        <dbReference type="ChEBI" id="CHEBI:15379"/>
        <dbReference type="ChEBI" id="CHEBI:16240"/>
        <dbReference type="ChEBI" id="CHEBI:57309"/>
        <dbReference type="ChEBI" id="CHEBI:131725"/>
        <dbReference type="EC" id="1.3.3.15"/>
    </reaction>
    <physiologicalReaction direction="left-to-right" evidence="1">
        <dbReference type="Rhea" id="RHEA:43437"/>
    </physiologicalReaction>
</comment>
<comment type="cofactor">
    <cofactor evidence="1">
        <name>FAD</name>
        <dbReference type="ChEBI" id="CHEBI:57692"/>
    </cofactor>
    <text evidence="1">Binds 1 FAD per subunit.</text>
</comment>
<comment type="pathway">
    <text evidence="1">Porphyrin-containing compound metabolism; protoheme biosynthesis.</text>
</comment>
<comment type="subcellular location">
    <subcellularLocation>
        <location evidence="1">Cytoplasm</location>
    </subcellularLocation>
</comment>
<comment type="similarity">
    <text evidence="3">Belongs to the protoporphyrinogen/coproporphyrinogen oxidase family. Coproporphyrinogen III oxidase subfamily.</text>
</comment>
<organism>
    <name type="scientific">Mycobacterium bovis (strain ATCC BAA-935 / AF2122/97)</name>
    <dbReference type="NCBI Taxonomy" id="233413"/>
    <lineage>
        <taxon>Bacteria</taxon>
        <taxon>Bacillati</taxon>
        <taxon>Actinomycetota</taxon>
        <taxon>Actinomycetes</taxon>
        <taxon>Mycobacteriales</taxon>
        <taxon>Mycobacteriaceae</taxon>
        <taxon>Mycobacterium</taxon>
        <taxon>Mycobacterium tuberculosis complex</taxon>
    </lineage>
</organism>
<protein>
    <recommendedName>
        <fullName evidence="1">Coproporphyrinogen III oxidase</fullName>
        <ecNumber evidence="1">1.3.3.15</ecNumber>
    </recommendedName>
</protein>
<reference key="1">
    <citation type="journal article" date="2003" name="Proc. Natl. Acad. Sci. U.S.A.">
        <title>The complete genome sequence of Mycobacterium bovis.</title>
        <authorList>
            <person name="Garnier T."/>
            <person name="Eiglmeier K."/>
            <person name="Camus J.-C."/>
            <person name="Medina N."/>
            <person name="Mansoor H."/>
            <person name="Pryor M."/>
            <person name="Duthoy S."/>
            <person name="Grondin S."/>
            <person name="Lacroix C."/>
            <person name="Monsempe C."/>
            <person name="Simon S."/>
            <person name="Harris B."/>
            <person name="Atkin R."/>
            <person name="Doggett J."/>
            <person name="Mayes R."/>
            <person name="Keating L."/>
            <person name="Wheeler P.R."/>
            <person name="Parkhill J."/>
            <person name="Barrell B.G."/>
            <person name="Cole S.T."/>
            <person name="Gordon S.V."/>
            <person name="Hewinson R.G."/>
        </authorList>
    </citation>
    <scope>NUCLEOTIDE SEQUENCE [LARGE SCALE GENOMIC DNA]</scope>
    <source>
        <strain>ATCC BAA-935 / AF2122/97</strain>
    </source>
</reference>
<reference key="2">
    <citation type="journal article" date="2017" name="Genome Announc.">
        <title>Updated reference genome sequence and annotation of Mycobacterium bovis AF2122/97.</title>
        <authorList>
            <person name="Malone K.M."/>
            <person name="Farrell D."/>
            <person name="Stuber T.P."/>
            <person name="Schubert O.T."/>
            <person name="Aebersold R."/>
            <person name="Robbe-Austerman S."/>
            <person name="Gordon S.V."/>
        </authorList>
    </citation>
    <scope>NUCLEOTIDE SEQUENCE [LARGE SCALE GENOMIC DNA]</scope>
    <scope>GENOME REANNOTATION</scope>
    <source>
        <strain>ATCC BAA-935 / AF2122/97</strain>
    </source>
</reference>
<name>CGOX_MYCBO</name>
<dbReference type="EC" id="1.3.3.15" evidence="1"/>
<dbReference type="EMBL" id="LT708304">
    <property type="protein sequence ID" value="SIU01314.1"/>
    <property type="molecule type" value="Genomic_DNA"/>
</dbReference>
<dbReference type="RefSeq" id="NP_856342.1">
    <property type="nucleotide sequence ID" value="NC_002945.3"/>
</dbReference>
<dbReference type="RefSeq" id="WP_003413871.1">
    <property type="nucleotide sequence ID" value="NC_002945.4"/>
</dbReference>
<dbReference type="SMR" id="P0A5A8"/>
<dbReference type="KEGG" id="mbo:BQ2027_MB2696C"/>
<dbReference type="PATRIC" id="fig|233413.5.peg.2955"/>
<dbReference type="UniPathway" id="UPA00252"/>
<dbReference type="Proteomes" id="UP000001419">
    <property type="component" value="Chromosome"/>
</dbReference>
<dbReference type="GO" id="GO:0005737">
    <property type="term" value="C:cytoplasm"/>
    <property type="evidence" value="ECO:0007669"/>
    <property type="project" value="UniProtKB-SubCell"/>
</dbReference>
<dbReference type="GO" id="GO:0004729">
    <property type="term" value="F:oxygen-dependent protoporphyrinogen oxidase activity"/>
    <property type="evidence" value="ECO:0007669"/>
    <property type="project" value="InterPro"/>
</dbReference>
<dbReference type="GO" id="GO:0006783">
    <property type="term" value="P:heme biosynthetic process"/>
    <property type="evidence" value="ECO:0007669"/>
    <property type="project" value="UniProtKB-KW"/>
</dbReference>
<dbReference type="Gene3D" id="3.50.50.60">
    <property type="entry name" value="FAD/NAD(P)-binding domain"/>
    <property type="match status" value="1"/>
</dbReference>
<dbReference type="Gene3D" id="1.10.3110.10">
    <property type="entry name" value="protoporphyrinogen ix oxidase, domain 3"/>
    <property type="match status" value="1"/>
</dbReference>
<dbReference type="Gene3D" id="3.90.660.20">
    <property type="entry name" value="Protoporphyrinogen oxidase, mitochondrial, domain 2"/>
    <property type="match status" value="1"/>
</dbReference>
<dbReference type="InterPro" id="IPR002937">
    <property type="entry name" value="Amino_oxidase"/>
</dbReference>
<dbReference type="InterPro" id="IPR036188">
    <property type="entry name" value="FAD/NAD-bd_sf"/>
</dbReference>
<dbReference type="InterPro" id="IPR004572">
    <property type="entry name" value="Protoporphyrinogen_oxidase"/>
</dbReference>
<dbReference type="InterPro" id="IPR050464">
    <property type="entry name" value="Zeta_carotene_desat/Oxidored"/>
</dbReference>
<dbReference type="NCBIfam" id="NF008841">
    <property type="entry name" value="PRK11883.1-1"/>
    <property type="match status" value="1"/>
</dbReference>
<dbReference type="NCBIfam" id="TIGR00562">
    <property type="entry name" value="proto_IX_ox"/>
    <property type="match status" value="1"/>
</dbReference>
<dbReference type="PANTHER" id="PTHR42923">
    <property type="entry name" value="PROTOPORPHYRINOGEN OXIDASE"/>
    <property type="match status" value="1"/>
</dbReference>
<dbReference type="PANTHER" id="PTHR42923:SF3">
    <property type="entry name" value="PROTOPORPHYRINOGEN OXIDASE"/>
    <property type="match status" value="1"/>
</dbReference>
<dbReference type="Pfam" id="PF01593">
    <property type="entry name" value="Amino_oxidase"/>
    <property type="match status" value="1"/>
</dbReference>
<dbReference type="SUPFAM" id="SSF54373">
    <property type="entry name" value="FAD-linked reductases, C-terminal domain"/>
    <property type="match status" value="1"/>
</dbReference>
<dbReference type="SUPFAM" id="SSF51905">
    <property type="entry name" value="FAD/NAD(P)-binding domain"/>
    <property type="match status" value="1"/>
</dbReference>
<proteinExistence type="inferred from homology"/>
<gene>
    <name evidence="1" type="primary">cgoX</name>
    <name type="synonym">hemY</name>
    <name type="ordered locus">BQ2027_MB2696C</name>
</gene>